<name>HYPA_PECAS</name>
<comment type="function">
    <text evidence="1">Involved in the maturation of [NiFe] hydrogenases. Required for nickel insertion into the metal center of the hydrogenase.</text>
</comment>
<comment type="similarity">
    <text evidence="1">Belongs to the HypA/HybF family.</text>
</comment>
<reference key="1">
    <citation type="journal article" date="2004" name="Proc. Natl. Acad. Sci. U.S.A.">
        <title>Genome sequence of the enterobacterial phytopathogen Erwinia carotovora subsp. atroseptica and characterization of virulence factors.</title>
        <authorList>
            <person name="Bell K.S."/>
            <person name="Sebaihia M."/>
            <person name="Pritchard L."/>
            <person name="Holden M.T.G."/>
            <person name="Hyman L.J."/>
            <person name="Holeva M.C."/>
            <person name="Thomson N.R."/>
            <person name="Bentley S.D."/>
            <person name="Churcher L.J.C."/>
            <person name="Mungall K."/>
            <person name="Atkin R."/>
            <person name="Bason N."/>
            <person name="Brooks K."/>
            <person name="Chillingworth T."/>
            <person name="Clark K."/>
            <person name="Doggett J."/>
            <person name="Fraser A."/>
            <person name="Hance Z."/>
            <person name="Hauser H."/>
            <person name="Jagels K."/>
            <person name="Moule S."/>
            <person name="Norbertczak H."/>
            <person name="Ormond D."/>
            <person name="Price C."/>
            <person name="Quail M.A."/>
            <person name="Sanders M."/>
            <person name="Walker D."/>
            <person name="Whitehead S."/>
            <person name="Salmond G.P.C."/>
            <person name="Birch P.R.J."/>
            <person name="Parkhill J."/>
            <person name="Toth I.K."/>
        </authorList>
    </citation>
    <scope>NUCLEOTIDE SEQUENCE [LARGE SCALE GENOMIC DNA]</scope>
    <source>
        <strain>SCRI 1043 / ATCC BAA-672</strain>
    </source>
</reference>
<keyword id="KW-0479">Metal-binding</keyword>
<keyword id="KW-0533">Nickel</keyword>
<keyword id="KW-1185">Reference proteome</keyword>
<keyword id="KW-0862">Zinc</keyword>
<protein>
    <recommendedName>
        <fullName evidence="1">Hydrogenase maturation factor HypA</fullName>
    </recommendedName>
</protein>
<feature type="chain" id="PRO_0000129039" description="Hydrogenase maturation factor HypA">
    <location>
        <begin position="1"/>
        <end position="117"/>
    </location>
</feature>
<feature type="binding site" evidence="1">
    <location>
        <position position="2"/>
    </location>
    <ligand>
        <name>Ni(2+)</name>
        <dbReference type="ChEBI" id="CHEBI:49786"/>
    </ligand>
</feature>
<feature type="binding site" evidence="1">
    <location>
        <position position="73"/>
    </location>
    <ligand>
        <name>Zn(2+)</name>
        <dbReference type="ChEBI" id="CHEBI:29105"/>
    </ligand>
</feature>
<feature type="binding site" evidence="1">
    <location>
        <position position="76"/>
    </location>
    <ligand>
        <name>Zn(2+)</name>
        <dbReference type="ChEBI" id="CHEBI:29105"/>
    </ligand>
</feature>
<feature type="binding site" evidence="1">
    <location>
        <position position="90"/>
    </location>
    <ligand>
        <name>Zn(2+)</name>
        <dbReference type="ChEBI" id="CHEBI:29105"/>
    </ligand>
</feature>
<feature type="binding site" evidence="1">
    <location>
        <position position="93"/>
    </location>
    <ligand>
        <name>Zn(2+)</name>
        <dbReference type="ChEBI" id="CHEBI:29105"/>
    </ligand>
</feature>
<dbReference type="EMBL" id="BX950851">
    <property type="protein sequence ID" value="CAG74145.1"/>
    <property type="molecule type" value="Genomic_DNA"/>
</dbReference>
<dbReference type="RefSeq" id="WP_011092825.1">
    <property type="nucleotide sequence ID" value="NC_004547.2"/>
</dbReference>
<dbReference type="SMR" id="Q6D7U0"/>
<dbReference type="STRING" id="218491.ECA1235"/>
<dbReference type="GeneID" id="57208046"/>
<dbReference type="KEGG" id="eca:ECA1235"/>
<dbReference type="PATRIC" id="fig|218491.5.peg.1256"/>
<dbReference type="eggNOG" id="COG0375">
    <property type="taxonomic scope" value="Bacteria"/>
</dbReference>
<dbReference type="HOGENOM" id="CLU_126929_0_0_6"/>
<dbReference type="OrthoDB" id="288014at2"/>
<dbReference type="Proteomes" id="UP000007966">
    <property type="component" value="Chromosome"/>
</dbReference>
<dbReference type="GO" id="GO:0016151">
    <property type="term" value="F:nickel cation binding"/>
    <property type="evidence" value="ECO:0007669"/>
    <property type="project" value="UniProtKB-UniRule"/>
</dbReference>
<dbReference type="GO" id="GO:0008270">
    <property type="term" value="F:zinc ion binding"/>
    <property type="evidence" value="ECO:0007669"/>
    <property type="project" value="UniProtKB-UniRule"/>
</dbReference>
<dbReference type="GO" id="GO:0051604">
    <property type="term" value="P:protein maturation"/>
    <property type="evidence" value="ECO:0007669"/>
    <property type="project" value="InterPro"/>
</dbReference>
<dbReference type="GO" id="GO:0036211">
    <property type="term" value="P:protein modification process"/>
    <property type="evidence" value="ECO:0007669"/>
    <property type="project" value="UniProtKB-UniRule"/>
</dbReference>
<dbReference type="FunFam" id="3.30.2320.80:FF:000001">
    <property type="entry name" value="Hydrogenase maturation factor HypA"/>
    <property type="match status" value="1"/>
</dbReference>
<dbReference type="Gene3D" id="3.30.2320.80">
    <property type="match status" value="1"/>
</dbReference>
<dbReference type="HAMAP" id="MF_00213">
    <property type="entry name" value="HypA_HybF"/>
    <property type="match status" value="1"/>
</dbReference>
<dbReference type="InterPro" id="IPR020538">
    <property type="entry name" value="Hydgase_Ni_incorp_HypA/HybF_CS"/>
</dbReference>
<dbReference type="InterPro" id="IPR000688">
    <property type="entry name" value="HypA/HybF"/>
</dbReference>
<dbReference type="NCBIfam" id="TIGR00100">
    <property type="entry name" value="hypA"/>
    <property type="match status" value="1"/>
</dbReference>
<dbReference type="NCBIfam" id="NF002979">
    <property type="entry name" value="PRK03681.1"/>
    <property type="match status" value="1"/>
</dbReference>
<dbReference type="NCBIfam" id="NF009046">
    <property type="entry name" value="PRK12380.1"/>
    <property type="match status" value="1"/>
</dbReference>
<dbReference type="PANTHER" id="PTHR34535">
    <property type="entry name" value="HYDROGENASE MATURATION FACTOR HYPA"/>
    <property type="match status" value="1"/>
</dbReference>
<dbReference type="PANTHER" id="PTHR34535:SF3">
    <property type="entry name" value="HYDROGENASE MATURATION FACTOR HYPA"/>
    <property type="match status" value="1"/>
</dbReference>
<dbReference type="Pfam" id="PF01155">
    <property type="entry name" value="HypA"/>
    <property type="match status" value="1"/>
</dbReference>
<dbReference type="PIRSF" id="PIRSF004761">
    <property type="entry name" value="Hydrgn_mat_HypA"/>
    <property type="match status" value="1"/>
</dbReference>
<dbReference type="PROSITE" id="PS01249">
    <property type="entry name" value="HYPA"/>
    <property type="match status" value="1"/>
</dbReference>
<organism>
    <name type="scientific">Pectobacterium atrosepticum (strain SCRI 1043 / ATCC BAA-672)</name>
    <name type="common">Erwinia carotovora subsp. atroseptica</name>
    <dbReference type="NCBI Taxonomy" id="218491"/>
    <lineage>
        <taxon>Bacteria</taxon>
        <taxon>Pseudomonadati</taxon>
        <taxon>Pseudomonadota</taxon>
        <taxon>Gammaproteobacteria</taxon>
        <taxon>Enterobacterales</taxon>
        <taxon>Pectobacteriaceae</taxon>
        <taxon>Pectobacterium</taxon>
    </lineage>
</organism>
<proteinExistence type="inferred from homology"/>
<gene>
    <name evidence="1" type="primary">hypA</name>
    <name type="ordered locus">ECA1235</name>
</gene>
<evidence type="ECO:0000255" key="1">
    <source>
        <dbReference type="HAMAP-Rule" id="MF_00213"/>
    </source>
</evidence>
<sequence>MHELTLCQRAIEIIEQQAQQHGAKKVTAVWLEIGAFSCVETSSLDFCFGMVCRRTLAEGCQLHLHQQEAECWCYDCQQSVTLLTIQVRRCPQCQGDNLRIVADDGIQLKRMEIEQEI</sequence>
<accession>Q6D7U0</accession>